<feature type="signal peptide" evidence="1">
    <location>
        <begin position="1"/>
        <end position="25"/>
    </location>
</feature>
<feature type="chain" id="PRO_0000036055" description="Putative UDP-glucuronosyltransferase ugt-50">
    <location>
        <begin position="26"/>
        <end position="523"/>
    </location>
</feature>
<feature type="transmembrane region" description="Helical" evidence="1">
    <location>
        <begin position="490"/>
        <end position="508"/>
    </location>
</feature>
<feature type="glycosylation site" description="N-linked (GlcNAc...) asparagine" evidence="2">
    <location>
        <position position="84"/>
    </location>
</feature>
<feature type="glycosylation site" description="N-linked (GlcNAc...) asparagine" evidence="2">
    <location>
        <position position="248"/>
    </location>
</feature>
<feature type="glycosylation site" description="N-linked (GlcNAc...) asparagine" evidence="2">
    <location>
        <position position="283"/>
    </location>
</feature>
<feature type="glycosylation site" description="N-linked (GlcNAc...) asparagine" evidence="1">
    <location>
        <position position="487"/>
    </location>
</feature>
<feature type="splice variant" id="VSP_021638" description="In isoform b." evidence="3">
    <original>LPTLPSYVP</original>
    <variation>KPMTTFAES</variation>
    <location>
        <begin position="182"/>
        <end position="190"/>
    </location>
</feature>
<feature type="splice variant" id="VSP_021639" description="In isoform b." evidence="3">
    <location>
        <begin position="191"/>
        <end position="523"/>
    </location>
</feature>
<dbReference type="EC" id="2.4.1.17"/>
<dbReference type="EMBL" id="Z50006">
    <property type="protein sequence ID" value="CAA90301.1"/>
    <property type="molecule type" value="Genomic_DNA"/>
</dbReference>
<dbReference type="EMBL" id="Z50006">
    <property type="protein sequence ID" value="CAD44148.1"/>
    <property type="molecule type" value="Genomic_DNA"/>
</dbReference>
<dbReference type="PIR" id="T24647">
    <property type="entry name" value="T24647"/>
</dbReference>
<dbReference type="PIR" id="T24652">
    <property type="entry name" value="T24652"/>
</dbReference>
<dbReference type="RefSeq" id="NP_001359531.1">
    <molecule id="Q22295-2"/>
    <property type="nucleotide sequence ID" value="NM_001373541.1"/>
</dbReference>
<dbReference type="RefSeq" id="NP_510118.1">
    <property type="nucleotide sequence ID" value="NM_077717.3"/>
</dbReference>
<dbReference type="RefSeq" id="NP_741913.1">
    <molecule id="Q22295-1"/>
    <property type="nucleotide sequence ID" value="NM_171786.8"/>
</dbReference>
<dbReference type="SMR" id="Q22295"/>
<dbReference type="BioGRID" id="46317">
    <property type="interactions" value="1"/>
</dbReference>
<dbReference type="FunCoup" id="Q22295">
    <property type="interactions" value="173"/>
</dbReference>
<dbReference type="STRING" id="6239.T07C5.1c.1"/>
<dbReference type="CAZy" id="GT1">
    <property type="family name" value="Glycosyltransferase Family 1"/>
</dbReference>
<dbReference type="GlyCosmos" id="Q22295">
    <property type="glycosylation" value="4 sites, No reported glycans"/>
</dbReference>
<dbReference type="iPTMnet" id="Q22295"/>
<dbReference type="PaxDb" id="6239-T07C5.1c"/>
<dbReference type="PeptideAtlas" id="Q22295"/>
<dbReference type="EnsemblMetazoa" id="T07C5.1b.1">
    <molecule id="Q22295-2"/>
    <property type="protein sequence ID" value="T07C5.1b.1"/>
    <property type="gene ID" value="WBGene00011564"/>
</dbReference>
<dbReference type="EnsemblMetazoa" id="T07C5.1b.2">
    <molecule id="Q22295-2"/>
    <property type="protein sequence ID" value="T07C5.1b.2"/>
    <property type="gene ID" value="WBGene00011564"/>
</dbReference>
<dbReference type="EnsemblMetazoa" id="T07C5.1c.1">
    <molecule id="Q22295-1"/>
    <property type="protein sequence ID" value="T07C5.1c.1"/>
    <property type="gene ID" value="WBGene00011564"/>
</dbReference>
<dbReference type="GeneID" id="181413"/>
<dbReference type="KEGG" id="cel:CELE_T07C5.1"/>
<dbReference type="UCSC" id="T07C5.1b">
    <molecule id="Q22295-1"/>
    <property type="organism name" value="c. elegans"/>
</dbReference>
<dbReference type="AGR" id="WB:WBGene00011564"/>
<dbReference type="CTD" id="181413"/>
<dbReference type="WormBase" id="T07C5.1b">
    <molecule id="Q22295-2"/>
    <property type="protein sequence ID" value="CE18217"/>
    <property type="gene ID" value="WBGene00011564"/>
    <property type="gene designation" value="ugt-50"/>
</dbReference>
<dbReference type="WormBase" id="T07C5.1c">
    <molecule id="Q22295-1"/>
    <property type="protein sequence ID" value="CE31603"/>
    <property type="gene ID" value="WBGene00011564"/>
    <property type="gene designation" value="ugt-50"/>
</dbReference>
<dbReference type="eggNOG" id="KOG1192">
    <property type="taxonomic scope" value="Eukaryota"/>
</dbReference>
<dbReference type="HOGENOM" id="CLU_012949_1_3_1"/>
<dbReference type="InParanoid" id="Q22295"/>
<dbReference type="OMA" id="IDPCNPA"/>
<dbReference type="OrthoDB" id="5835829at2759"/>
<dbReference type="PhylomeDB" id="Q22295"/>
<dbReference type="PRO" id="PR:Q22295"/>
<dbReference type="Proteomes" id="UP000001940">
    <property type="component" value="Chromosome X"/>
</dbReference>
<dbReference type="Bgee" id="WBGene00011564">
    <property type="expression patterns" value="Expressed in pharyngeal muscle cell (C elegans) and 3 other cell types or tissues"/>
</dbReference>
<dbReference type="ExpressionAtlas" id="Q22295">
    <property type="expression patterns" value="baseline and differential"/>
</dbReference>
<dbReference type="GO" id="GO:0016020">
    <property type="term" value="C:membrane"/>
    <property type="evidence" value="ECO:0007669"/>
    <property type="project" value="UniProtKB-SubCell"/>
</dbReference>
<dbReference type="GO" id="GO:0015020">
    <property type="term" value="F:glucuronosyltransferase activity"/>
    <property type="evidence" value="ECO:0007669"/>
    <property type="project" value="UniProtKB-EC"/>
</dbReference>
<dbReference type="GO" id="GO:0008194">
    <property type="term" value="F:UDP-glycosyltransferase activity"/>
    <property type="evidence" value="ECO:0000318"/>
    <property type="project" value="GO_Central"/>
</dbReference>
<dbReference type="CDD" id="cd03784">
    <property type="entry name" value="GT1_Gtf-like"/>
    <property type="match status" value="1"/>
</dbReference>
<dbReference type="FunFam" id="3.40.50.2000:FF:000021">
    <property type="entry name" value="UDP-glucuronosyltransferase"/>
    <property type="match status" value="1"/>
</dbReference>
<dbReference type="Gene3D" id="3.40.50.2000">
    <property type="entry name" value="Glycogen Phosphorylase B"/>
    <property type="match status" value="1"/>
</dbReference>
<dbReference type="InterPro" id="IPR050271">
    <property type="entry name" value="UDP-glycosyltransferase"/>
</dbReference>
<dbReference type="InterPro" id="IPR002213">
    <property type="entry name" value="UDP_glucos_trans"/>
</dbReference>
<dbReference type="InterPro" id="IPR035595">
    <property type="entry name" value="UDP_glycos_trans_CS"/>
</dbReference>
<dbReference type="PANTHER" id="PTHR48043">
    <property type="entry name" value="EG:EG0003.4 PROTEIN-RELATED"/>
    <property type="match status" value="1"/>
</dbReference>
<dbReference type="PANTHER" id="PTHR48043:SF109">
    <property type="entry name" value="UDP-GLUCURONOSYLTRANSFERASE UGT-50-RELATED"/>
    <property type="match status" value="1"/>
</dbReference>
<dbReference type="Pfam" id="PF00201">
    <property type="entry name" value="UDPGT"/>
    <property type="match status" value="1"/>
</dbReference>
<dbReference type="SUPFAM" id="SSF53756">
    <property type="entry name" value="UDP-Glycosyltransferase/glycogen phosphorylase"/>
    <property type="match status" value="1"/>
</dbReference>
<dbReference type="PROSITE" id="PS00375">
    <property type="entry name" value="UDPGT"/>
    <property type="match status" value="1"/>
</dbReference>
<accession>Q22295</accession>
<accession>O62371</accession>
<accession>Q8MPX8</accession>
<protein>
    <recommendedName>
        <fullName>Putative UDP-glucuronosyltransferase ugt-50</fullName>
        <shortName>UDPGT 50</shortName>
        <ecNumber>2.4.1.17</ecNumber>
    </recommendedName>
</protein>
<sequence>MHYSQMRWMFFCLTALLHGSFIVNAAKILVYCPSISKSHVLLCSKYADLLHNAGHDTVLFIPSYSKLLDNYDGAKHAKVWRLHNVTEAYDTKLGTLANVMENSHIGFIDRLTFDADFWIDMCADLLGKLPEMQHIIDYKFDLVIYNEIDPCTPAIVRLFNIPKTVLLSSEAIMDKVAWNLGLPTLPSYVPSVEENPNHDRMSFFERMSNVYKFFQSIVVHYLQDIHVLNLFRKEVSSDFPSIAEIIRNVSLVLVNTDEIFDLPRSYSSKFVYVGMLEAGKDENVTLPKKQDDYFKKGKSGSVFVSFGTVTPFRSLPERIQLSILNAIQKLPDYHFVVKTTADDESSAQFFSTVQNVDLVDWVPQKAVLRHANLKLFVSHGGMNSVLETMYYGVPMVIMPVFTDQFRNGRNVERRGAGKMVLRETVVKETFFDAIHSVLEEKSYSSSVKRISHLMKNKPFTSEERVTKWIDFVLKYETSEHFDLESNNLSIIEHNHLDLFFYLCIISLLNFVVYRKIFKRKSQS</sequence>
<organism>
    <name type="scientific">Caenorhabditis elegans</name>
    <dbReference type="NCBI Taxonomy" id="6239"/>
    <lineage>
        <taxon>Eukaryota</taxon>
        <taxon>Metazoa</taxon>
        <taxon>Ecdysozoa</taxon>
        <taxon>Nematoda</taxon>
        <taxon>Chromadorea</taxon>
        <taxon>Rhabditida</taxon>
        <taxon>Rhabditina</taxon>
        <taxon>Rhabditomorpha</taxon>
        <taxon>Rhabditoidea</taxon>
        <taxon>Rhabditidae</taxon>
        <taxon>Peloderinae</taxon>
        <taxon>Caenorhabditis</taxon>
    </lineage>
</organism>
<keyword id="KW-0025">Alternative splicing</keyword>
<keyword id="KW-0325">Glycoprotein</keyword>
<keyword id="KW-0328">Glycosyltransferase</keyword>
<keyword id="KW-0472">Membrane</keyword>
<keyword id="KW-1185">Reference proteome</keyword>
<keyword id="KW-0732">Signal</keyword>
<keyword id="KW-0808">Transferase</keyword>
<keyword id="KW-0812">Transmembrane</keyword>
<keyword id="KW-1133">Transmembrane helix</keyword>
<name>UGT50_CAEEL</name>
<proteinExistence type="evidence at protein level"/>
<comment type="catalytic activity">
    <reaction>
        <text>glucuronate acceptor + UDP-alpha-D-glucuronate = acceptor beta-D-glucuronoside + UDP + H(+)</text>
        <dbReference type="Rhea" id="RHEA:21032"/>
        <dbReference type="ChEBI" id="CHEBI:15378"/>
        <dbReference type="ChEBI" id="CHEBI:58052"/>
        <dbReference type="ChEBI" id="CHEBI:58223"/>
        <dbReference type="ChEBI" id="CHEBI:132367"/>
        <dbReference type="ChEBI" id="CHEBI:132368"/>
        <dbReference type="EC" id="2.4.1.17"/>
    </reaction>
</comment>
<comment type="subcellular location">
    <subcellularLocation>
        <location evidence="3">Membrane</location>
        <topology evidence="3">Single-pass membrane protein</topology>
    </subcellularLocation>
</comment>
<comment type="alternative products">
    <event type="alternative splicing"/>
    <isoform>
        <id>Q22295-1</id>
        <name>c</name>
        <sequence type="displayed"/>
    </isoform>
    <isoform>
        <id>Q22295-2</id>
        <name>b</name>
        <sequence type="described" ref="VSP_021638 VSP_021639"/>
    </isoform>
</comment>
<comment type="similarity">
    <text evidence="3">Belongs to the UDP-glycosyltransferase family.</text>
</comment>
<reference key="1">
    <citation type="journal article" date="1998" name="Science">
        <title>Genome sequence of the nematode C. elegans: a platform for investigating biology.</title>
        <authorList>
            <consortium name="The C. elegans sequencing consortium"/>
        </authorList>
    </citation>
    <scope>NUCLEOTIDE SEQUENCE [LARGE SCALE GENOMIC DNA]</scope>
    <scope>ALTERNATIVE SPLICING</scope>
    <source>
        <strain>Bristol N2</strain>
    </source>
</reference>
<reference key="2">
    <citation type="journal article" date="2007" name="Mol. Cell. Proteomics">
        <title>Proteomics reveals N-linked glycoprotein diversity in Caenorhabditis elegans and suggests an atypical translocation mechanism for integral membrane proteins.</title>
        <authorList>
            <person name="Kaji H."/>
            <person name="Kamiie J."/>
            <person name="Kawakami H."/>
            <person name="Kido K."/>
            <person name="Yamauchi Y."/>
            <person name="Shinkawa T."/>
            <person name="Taoka M."/>
            <person name="Takahashi N."/>
            <person name="Isobe T."/>
        </authorList>
    </citation>
    <scope>GLYCOSYLATION [LARGE SCALE ANALYSIS] AT ASN-84; ASN-248 AND ASN-283</scope>
    <scope>IDENTIFICATION BY MASS SPECTROMETRY</scope>
    <source>
        <strain>Bristol N2</strain>
    </source>
</reference>
<gene>
    <name type="primary">ugt-50</name>
    <name type="synonym">ugt16</name>
    <name type="ORF">T07C5.1</name>
</gene>
<evidence type="ECO:0000255" key="1"/>
<evidence type="ECO:0000269" key="2">
    <source>
    </source>
</evidence>
<evidence type="ECO:0000305" key="3"/>